<organism>
    <name type="scientific">Myxoma virus (strain Lausanne)</name>
    <name type="common">MYXV</name>
    <dbReference type="NCBI Taxonomy" id="31530"/>
    <lineage>
        <taxon>Viruses</taxon>
        <taxon>Varidnaviria</taxon>
        <taxon>Bamfordvirae</taxon>
        <taxon>Nucleocytoviricota</taxon>
        <taxon>Pokkesviricetes</taxon>
        <taxon>Chitovirales</taxon>
        <taxon>Poxviridae</taxon>
        <taxon>Chordopoxvirinae</taxon>
        <taxon>Leporipoxvirus</taxon>
        <taxon>Myxoma virus</taxon>
    </lineage>
</organism>
<protein>
    <recommendedName>
        <fullName>Probable host range protein 2-3</fullName>
    </recommendedName>
</protein>
<keyword id="KW-0002">3D-structure</keyword>
<keyword id="KW-1185">Reference proteome</keyword>
<dbReference type="EMBL" id="AF170726">
    <property type="protein sequence ID" value="AAF14952.1"/>
    <property type="molecule type" value="Genomic_DNA"/>
</dbReference>
<dbReference type="RefSeq" id="NP_051778.1">
    <property type="nucleotide sequence ID" value="NC_001132.2"/>
</dbReference>
<dbReference type="PDB" id="5CZ3">
    <property type="method" value="X-ray"/>
    <property type="resolution" value="2.50 A"/>
    <property type="chains" value="A/B=1-203"/>
</dbReference>
<dbReference type="PDBsum" id="5CZ3"/>
<dbReference type="SMR" id="Q9Q8N4"/>
<dbReference type="GeneID" id="932113"/>
<dbReference type="KEGG" id="vg:932113"/>
<dbReference type="EvolutionaryTrace" id="Q9Q8N4"/>
<dbReference type="Proteomes" id="UP000000867">
    <property type="component" value="Segment"/>
</dbReference>
<dbReference type="GO" id="GO:0016032">
    <property type="term" value="P:viral process"/>
    <property type="evidence" value="ECO:0007669"/>
    <property type="project" value="InterPro"/>
</dbReference>
<dbReference type="DisProt" id="DP01983"/>
<dbReference type="InterPro" id="IPR004967">
    <property type="entry name" value="Poxvirus_C7/F8A"/>
</dbReference>
<dbReference type="Pfam" id="PF03287">
    <property type="entry name" value="Pox_C7_F8A"/>
    <property type="match status" value="1"/>
</dbReference>
<organismHost>
    <name type="scientific">Oryctolagus cuniculus</name>
    <name type="common">Rabbit</name>
    <dbReference type="NCBI Taxonomy" id="9986"/>
</organismHost>
<comment type="function">
    <text evidence="1">Plays a role for multiplication of the virus in different cell types.</text>
</comment>
<comment type="similarity">
    <text evidence="3">Belongs to the poxviridae C7 protein family.</text>
</comment>
<gene>
    <name type="ordered locus">m064R</name>
</gene>
<sequence length="203" mass="23770">MEEGIVHKLDVFLIDENVSIKHVNLFDGDSYGCNIHLKTATCKYITFILVLEPDWENIVEAKPIHMRLNGKKIRVPLVAKTHTSLIYKVVIYVEEDALARFYSDVERSYTDVYPTFLVNTDTRRYYILDSGRTYTYIDPFISDGDKRRWLTREIEEAYDASTEEEEEDDTEEDMDTVHLYCLEEEDEEKIADTGNDNQKDAED</sequence>
<accession>Q9Q8N4</accession>
<evidence type="ECO:0000250" key="1"/>
<evidence type="ECO:0000256" key="2">
    <source>
        <dbReference type="SAM" id="MobiDB-lite"/>
    </source>
</evidence>
<evidence type="ECO:0000305" key="3"/>
<evidence type="ECO:0007829" key="4">
    <source>
        <dbReference type="PDB" id="5CZ3"/>
    </source>
</evidence>
<feature type="chain" id="PRO_0000099399" description="Probable host range protein 2-3">
    <location>
        <begin position="1"/>
        <end position="203"/>
    </location>
</feature>
<feature type="region of interest" description="Disordered" evidence="2">
    <location>
        <begin position="182"/>
        <end position="203"/>
    </location>
</feature>
<feature type="strand" evidence="4">
    <location>
        <begin position="8"/>
        <end position="13"/>
    </location>
</feature>
<feature type="turn" evidence="4">
    <location>
        <begin position="14"/>
        <end position="17"/>
    </location>
</feature>
<feature type="strand" evidence="4">
    <location>
        <begin position="18"/>
        <end position="21"/>
    </location>
</feature>
<feature type="strand" evidence="4">
    <location>
        <begin position="24"/>
        <end position="29"/>
    </location>
</feature>
<feature type="strand" evidence="4">
    <location>
        <begin position="32"/>
        <end position="38"/>
    </location>
</feature>
<feature type="strand" evidence="4">
    <location>
        <begin position="43"/>
        <end position="52"/>
    </location>
</feature>
<feature type="helix" evidence="4">
    <location>
        <begin position="55"/>
        <end position="57"/>
    </location>
</feature>
<feature type="strand" evidence="4">
    <location>
        <begin position="65"/>
        <end position="68"/>
    </location>
</feature>
<feature type="strand" evidence="4">
    <location>
        <begin position="71"/>
        <end position="73"/>
    </location>
</feature>
<feature type="strand" evidence="4">
    <location>
        <begin position="77"/>
        <end position="80"/>
    </location>
</feature>
<feature type="strand" evidence="4">
    <location>
        <begin position="85"/>
        <end position="95"/>
    </location>
</feature>
<feature type="strand" evidence="4">
    <location>
        <begin position="97"/>
        <end position="103"/>
    </location>
</feature>
<feature type="helix" evidence="4">
    <location>
        <begin position="107"/>
        <end position="110"/>
    </location>
</feature>
<feature type="strand" evidence="4">
    <location>
        <begin position="115"/>
        <end position="119"/>
    </location>
</feature>
<feature type="turn" evidence="4">
    <location>
        <begin position="120"/>
        <end position="123"/>
    </location>
</feature>
<feature type="strand" evidence="4">
    <location>
        <begin position="124"/>
        <end position="129"/>
    </location>
</feature>
<feature type="strand" evidence="4">
    <location>
        <begin position="136"/>
        <end position="140"/>
    </location>
</feature>
<feature type="helix" evidence="4">
    <location>
        <begin position="143"/>
        <end position="146"/>
    </location>
</feature>
<feature type="turn" evidence="4">
    <location>
        <begin position="147"/>
        <end position="149"/>
    </location>
</feature>
<proteinExistence type="evidence at protein level"/>
<name>VH23_MYXVL</name>
<reference key="1">
    <citation type="journal article" date="1999" name="Virology">
        <title>The complete DNA sequence of myxoma virus.</title>
        <authorList>
            <person name="Cameron C."/>
            <person name="Hota-Mitchell S."/>
            <person name="Chen L."/>
            <person name="Barrett J.W."/>
            <person name="Cao J.-X."/>
            <person name="Macaulay C."/>
            <person name="Willer D.O."/>
            <person name="Evans D.H."/>
            <person name="McFadden G."/>
        </authorList>
    </citation>
    <scope>NUCLEOTIDE SEQUENCE [LARGE SCALE GENOMIC DNA]</scope>
</reference>